<evidence type="ECO:0000250" key="1"/>
<evidence type="ECO:0000255" key="2">
    <source>
        <dbReference type="PROSITE-ProRule" id="PRU10009"/>
    </source>
</evidence>
<evidence type="ECO:0000305" key="3"/>
<name>G3P_SCLSC</name>
<protein>
    <recommendedName>
        <fullName>Glyceraldehyde-3-phosphate dehydrogenase</fullName>
        <shortName>GAPDH</shortName>
        <ecNumber>1.2.1.12</ecNumber>
    </recommendedName>
</protein>
<proteinExistence type="inferred from homology"/>
<sequence>MAPTKVGINGFGRIGRIVFRNAIEHDDIDIVAVNDPFIETEYAAYMLKYDSTHGQFKGDIKVLSDGLEVNGKKVKFYTERDPANIPWAESEAYYVVESTGVFTTTEKAKAHLKGGAKKVVISAPSADAPMYVMGVNNETYNGEADVISNASCTTNCLAPLAKVINDEFTIIESLMTTIHSYTATQKTVDGPSAKDWRGGRTAAQNIIPSSTGAAKAVGKVIPELNGKLTGMSMRVPTATVSVVDLTVRIEKAASYDEIKEVIKKAANGPLKGILAYTEDDVVSTDMNGDNHSSIFDAKAGISLNKNFVKLVSWYDNEWGYSRRVLDLLHYISKVDNKQ</sequence>
<organism>
    <name type="scientific">Sclerotinia sclerotiorum</name>
    <name type="common">White mold</name>
    <name type="synonym">Whetzelinia sclerotiorum</name>
    <dbReference type="NCBI Taxonomy" id="5180"/>
    <lineage>
        <taxon>Eukaryota</taxon>
        <taxon>Fungi</taxon>
        <taxon>Dikarya</taxon>
        <taxon>Ascomycota</taxon>
        <taxon>Pezizomycotina</taxon>
        <taxon>Leotiomycetes</taxon>
        <taxon>Helotiales</taxon>
        <taxon>Sclerotiniaceae</taxon>
        <taxon>Sclerotinia</taxon>
    </lineage>
</organism>
<accession>Q96US8</accession>
<reference key="1">
    <citation type="submission" date="2001-09" db="EMBL/GenBank/DDBJ databases">
        <title>Isolation and characterization of the glyceraldehyde-3-phosphate dehydrogenase gene of Sclerotinia sclerotiorum.</title>
        <authorList>
            <person name="Kasza Z."/>
            <person name="Cotton P."/>
            <person name="Fevre M."/>
        </authorList>
    </citation>
    <scope>NUCLEOTIDE SEQUENCE [GENOMIC DNA]</scope>
</reference>
<comment type="catalytic activity">
    <reaction evidence="2">
        <text>D-glyceraldehyde 3-phosphate + phosphate + NAD(+) = (2R)-3-phospho-glyceroyl phosphate + NADH + H(+)</text>
        <dbReference type="Rhea" id="RHEA:10300"/>
        <dbReference type="ChEBI" id="CHEBI:15378"/>
        <dbReference type="ChEBI" id="CHEBI:43474"/>
        <dbReference type="ChEBI" id="CHEBI:57540"/>
        <dbReference type="ChEBI" id="CHEBI:57604"/>
        <dbReference type="ChEBI" id="CHEBI:57945"/>
        <dbReference type="ChEBI" id="CHEBI:59776"/>
        <dbReference type="EC" id="1.2.1.12"/>
    </reaction>
</comment>
<comment type="pathway">
    <text>Carbohydrate degradation; glycolysis; pyruvate from D-glyceraldehyde 3-phosphate: step 1/5.</text>
</comment>
<comment type="subunit">
    <text evidence="1">Homotetramer.</text>
</comment>
<comment type="subcellular location">
    <subcellularLocation>
        <location evidence="1">Cytoplasm</location>
    </subcellularLocation>
</comment>
<comment type="similarity">
    <text evidence="3">Belongs to the glyceraldehyde-3-phosphate dehydrogenase family.</text>
</comment>
<dbReference type="EC" id="1.2.1.12"/>
<dbReference type="EMBL" id="AF417110">
    <property type="protein sequence ID" value="AAL09701.1"/>
    <property type="molecule type" value="Genomic_DNA"/>
</dbReference>
<dbReference type="SMR" id="Q96US8"/>
<dbReference type="VEuPathDB" id="FungiDB:sscle_11g083230"/>
<dbReference type="UniPathway" id="UPA00109">
    <property type="reaction ID" value="UER00184"/>
</dbReference>
<dbReference type="GO" id="GO:0005829">
    <property type="term" value="C:cytosol"/>
    <property type="evidence" value="ECO:0007669"/>
    <property type="project" value="TreeGrafter"/>
</dbReference>
<dbReference type="GO" id="GO:0004365">
    <property type="term" value="F:glyceraldehyde-3-phosphate dehydrogenase (NAD+) (phosphorylating) activity"/>
    <property type="evidence" value="ECO:0007669"/>
    <property type="project" value="UniProtKB-EC"/>
</dbReference>
<dbReference type="GO" id="GO:0051287">
    <property type="term" value="F:NAD binding"/>
    <property type="evidence" value="ECO:0007669"/>
    <property type="project" value="InterPro"/>
</dbReference>
<dbReference type="GO" id="GO:0050661">
    <property type="term" value="F:NADP binding"/>
    <property type="evidence" value="ECO:0007669"/>
    <property type="project" value="InterPro"/>
</dbReference>
<dbReference type="GO" id="GO:0006006">
    <property type="term" value="P:glucose metabolic process"/>
    <property type="evidence" value="ECO:0007669"/>
    <property type="project" value="InterPro"/>
</dbReference>
<dbReference type="GO" id="GO:0006096">
    <property type="term" value="P:glycolytic process"/>
    <property type="evidence" value="ECO:0007669"/>
    <property type="project" value="UniProtKB-UniPathway"/>
</dbReference>
<dbReference type="CDD" id="cd18126">
    <property type="entry name" value="GAPDH_I_C"/>
    <property type="match status" value="1"/>
</dbReference>
<dbReference type="CDD" id="cd05214">
    <property type="entry name" value="GAPDH_I_N"/>
    <property type="match status" value="1"/>
</dbReference>
<dbReference type="FunFam" id="3.30.360.10:FF:000001">
    <property type="entry name" value="Glyceraldehyde-3-phosphate dehydrogenase"/>
    <property type="match status" value="1"/>
</dbReference>
<dbReference type="FunFam" id="3.40.50.720:FF:000020">
    <property type="entry name" value="Glyceraldehyde-3-phosphate dehydrogenase"/>
    <property type="match status" value="1"/>
</dbReference>
<dbReference type="Gene3D" id="3.30.360.10">
    <property type="entry name" value="Dihydrodipicolinate Reductase, domain 2"/>
    <property type="match status" value="1"/>
</dbReference>
<dbReference type="Gene3D" id="3.40.50.720">
    <property type="entry name" value="NAD(P)-binding Rossmann-like Domain"/>
    <property type="match status" value="1"/>
</dbReference>
<dbReference type="InterPro" id="IPR020831">
    <property type="entry name" value="GlycerAld/Erythrose_P_DH"/>
</dbReference>
<dbReference type="InterPro" id="IPR020830">
    <property type="entry name" value="GlycerAld_3-P_DH_AS"/>
</dbReference>
<dbReference type="InterPro" id="IPR020829">
    <property type="entry name" value="GlycerAld_3-P_DH_cat"/>
</dbReference>
<dbReference type="InterPro" id="IPR020828">
    <property type="entry name" value="GlycerAld_3-P_DH_NAD(P)-bd"/>
</dbReference>
<dbReference type="InterPro" id="IPR006424">
    <property type="entry name" value="Glyceraldehyde-3-P_DH_1"/>
</dbReference>
<dbReference type="InterPro" id="IPR036291">
    <property type="entry name" value="NAD(P)-bd_dom_sf"/>
</dbReference>
<dbReference type="NCBIfam" id="TIGR01534">
    <property type="entry name" value="GAPDH-I"/>
    <property type="match status" value="1"/>
</dbReference>
<dbReference type="PANTHER" id="PTHR10836">
    <property type="entry name" value="GLYCERALDEHYDE 3-PHOSPHATE DEHYDROGENASE"/>
    <property type="match status" value="1"/>
</dbReference>
<dbReference type="PANTHER" id="PTHR10836:SF76">
    <property type="entry name" value="GLYCERALDEHYDE-3-PHOSPHATE DEHYDROGENASE-RELATED"/>
    <property type="match status" value="1"/>
</dbReference>
<dbReference type="Pfam" id="PF02800">
    <property type="entry name" value="Gp_dh_C"/>
    <property type="match status" value="1"/>
</dbReference>
<dbReference type="Pfam" id="PF00044">
    <property type="entry name" value="Gp_dh_N"/>
    <property type="match status" value="1"/>
</dbReference>
<dbReference type="PIRSF" id="PIRSF000149">
    <property type="entry name" value="GAP_DH"/>
    <property type="match status" value="1"/>
</dbReference>
<dbReference type="PRINTS" id="PR00078">
    <property type="entry name" value="G3PDHDRGNASE"/>
</dbReference>
<dbReference type="SMART" id="SM00846">
    <property type="entry name" value="Gp_dh_N"/>
    <property type="match status" value="1"/>
</dbReference>
<dbReference type="SUPFAM" id="SSF55347">
    <property type="entry name" value="Glyceraldehyde-3-phosphate dehydrogenase-like, C-terminal domain"/>
    <property type="match status" value="1"/>
</dbReference>
<dbReference type="SUPFAM" id="SSF51735">
    <property type="entry name" value="NAD(P)-binding Rossmann-fold domains"/>
    <property type="match status" value="1"/>
</dbReference>
<dbReference type="PROSITE" id="PS00071">
    <property type="entry name" value="GAPDH"/>
    <property type="match status" value="1"/>
</dbReference>
<feature type="chain" id="PRO_0000145582" description="Glyceraldehyde-3-phosphate dehydrogenase">
    <location>
        <begin position="1"/>
        <end position="338"/>
    </location>
</feature>
<feature type="active site" description="Nucleophile" evidence="2">
    <location>
        <position position="152"/>
    </location>
</feature>
<feature type="binding site" evidence="1">
    <location>
        <begin position="13"/>
        <end position="14"/>
    </location>
    <ligand>
        <name>NAD(+)</name>
        <dbReference type="ChEBI" id="CHEBI:57540"/>
    </ligand>
</feature>
<feature type="binding site" evidence="1">
    <location>
        <position position="35"/>
    </location>
    <ligand>
        <name>NAD(+)</name>
        <dbReference type="ChEBI" id="CHEBI:57540"/>
    </ligand>
</feature>
<feature type="binding site" evidence="1">
    <location>
        <position position="80"/>
    </location>
    <ligand>
        <name>NAD(+)</name>
        <dbReference type="ChEBI" id="CHEBI:57540"/>
    </ligand>
</feature>
<feature type="binding site" evidence="1">
    <location>
        <begin position="151"/>
        <end position="153"/>
    </location>
    <ligand>
        <name>D-glyceraldehyde 3-phosphate</name>
        <dbReference type="ChEBI" id="CHEBI:59776"/>
    </ligand>
</feature>
<feature type="binding site" evidence="1">
    <location>
        <position position="182"/>
    </location>
    <ligand>
        <name>D-glyceraldehyde 3-phosphate</name>
        <dbReference type="ChEBI" id="CHEBI:59776"/>
    </ligand>
</feature>
<feature type="binding site" evidence="1">
    <location>
        <begin position="211"/>
        <end position="212"/>
    </location>
    <ligand>
        <name>D-glyceraldehyde 3-phosphate</name>
        <dbReference type="ChEBI" id="CHEBI:59776"/>
    </ligand>
</feature>
<feature type="binding site" evidence="1">
    <location>
        <position position="234"/>
    </location>
    <ligand>
        <name>D-glyceraldehyde 3-phosphate</name>
        <dbReference type="ChEBI" id="CHEBI:59776"/>
    </ligand>
</feature>
<feature type="binding site" evidence="1">
    <location>
        <position position="316"/>
    </location>
    <ligand>
        <name>NAD(+)</name>
        <dbReference type="ChEBI" id="CHEBI:57540"/>
    </ligand>
</feature>
<feature type="site" description="Activates thiol group during catalysis" evidence="1">
    <location>
        <position position="179"/>
    </location>
</feature>
<keyword id="KW-0963">Cytoplasm</keyword>
<keyword id="KW-0324">Glycolysis</keyword>
<keyword id="KW-0520">NAD</keyword>
<keyword id="KW-0560">Oxidoreductase</keyword>
<gene>
    <name type="primary">GPD</name>
    <name type="synonym">GPDS</name>
</gene>